<reference key="1">
    <citation type="journal article" date="1995" name="Science">
        <title>Whole-genome random sequencing and assembly of Haemophilus influenzae Rd.</title>
        <authorList>
            <person name="Fleischmann R.D."/>
            <person name="Adams M.D."/>
            <person name="White O."/>
            <person name="Clayton R.A."/>
            <person name="Kirkness E.F."/>
            <person name="Kerlavage A.R."/>
            <person name="Bult C.J."/>
            <person name="Tomb J.-F."/>
            <person name="Dougherty B.A."/>
            <person name="Merrick J.M."/>
            <person name="McKenney K."/>
            <person name="Sutton G.G."/>
            <person name="FitzHugh W."/>
            <person name="Fields C.A."/>
            <person name="Gocayne J.D."/>
            <person name="Scott J.D."/>
            <person name="Shirley R."/>
            <person name="Liu L.-I."/>
            <person name="Glodek A."/>
            <person name="Kelley J.M."/>
            <person name="Weidman J.F."/>
            <person name="Phillips C.A."/>
            <person name="Spriggs T."/>
            <person name="Hedblom E."/>
            <person name="Cotton M.D."/>
            <person name="Utterback T.R."/>
            <person name="Hanna M.C."/>
            <person name="Nguyen D.T."/>
            <person name="Saudek D.M."/>
            <person name="Brandon R.C."/>
            <person name="Fine L.D."/>
            <person name="Fritchman J.L."/>
            <person name="Fuhrmann J.L."/>
            <person name="Geoghagen N.S.M."/>
            <person name="Gnehm C.L."/>
            <person name="McDonald L.A."/>
            <person name="Small K.V."/>
            <person name="Fraser C.M."/>
            <person name="Smith H.O."/>
            <person name="Venter J.C."/>
        </authorList>
    </citation>
    <scope>NUCLEOTIDE SEQUENCE [LARGE SCALE GENOMIC DNA]</scope>
    <source>
        <strain>ATCC 51907 / DSM 11121 / KW20 / Rd</strain>
    </source>
</reference>
<accession>P44194</accession>
<feature type="chain" id="PRO_0000078058" description="Uncharacterized protein HI_1423">
    <location>
        <begin position="1"/>
        <end position="94"/>
    </location>
</feature>
<proteinExistence type="predicted"/>
<name>Y1423_HAEIN</name>
<protein>
    <recommendedName>
        <fullName>Uncharacterized protein HI_1423</fullName>
    </recommendedName>
</protein>
<organism>
    <name type="scientific">Haemophilus influenzae (strain ATCC 51907 / DSM 11121 / KW20 / Rd)</name>
    <dbReference type="NCBI Taxonomy" id="71421"/>
    <lineage>
        <taxon>Bacteria</taxon>
        <taxon>Pseudomonadati</taxon>
        <taxon>Pseudomonadota</taxon>
        <taxon>Gammaproteobacteria</taxon>
        <taxon>Pasteurellales</taxon>
        <taxon>Pasteurellaceae</taxon>
        <taxon>Haemophilus</taxon>
    </lineage>
</organism>
<dbReference type="EMBL" id="L42023">
    <property type="protein sequence ID" value="AAC23073.1"/>
    <property type="molecule type" value="Genomic_DNA"/>
</dbReference>
<dbReference type="PIR" id="F64029">
    <property type="entry name" value="F64029"/>
</dbReference>
<dbReference type="RefSeq" id="NP_439572.1">
    <property type="nucleotide sequence ID" value="NC_000907.1"/>
</dbReference>
<dbReference type="SMR" id="P44194"/>
<dbReference type="EnsemblBacteria" id="AAC23073">
    <property type="protein sequence ID" value="AAC23073"/>
    <property type="gene ID" value="HI_1423"/>
</dbReference>
<dbReference type="KEGG" id="hin:HI_1423"/>
<dbReference type="PATRIC" id="fig|71421.8.peg.1481"/>
<dbReference type="HOGENOM" id="CLU_185166_0_0_6"/>
<dbReference type="OrthoDB" id="5683026at2"/>
<dbReference type="BioCyc" id="HINF71421:G1GJ1-1445-MONOMER"/>
<dbReference type="Proteomes" id="UP000000579">
    <property type="component" value="Chromosome"/>
</dbReference>
<gene>
    <name type="ordered locus">HI_1423</name>
</gene>
<sequence>MESIKLSQKAEEEIVNAARMAALSNLTEKSQNLITLEDIAIYFGRHYQTVAKIISKLPNFPKPVTPVTVDQQNSRPRYIAGEVVRWGRINAKPY</sequence>
<keyword id="KW-1185">Reference proteome</keyword>